<proteinExistence type="evidence at transcript level"/>
<evidence type="ECO:0000250" key="1"/>
<evidence type="ECO:0000250" key="2">
    <source>
        <dbReference type="UniProtKB" id="P00730"/>
    </source>
</evidence>
<evidence type="ECO:0000255" key="3"/>
<evidence type="ECO:0000255" key="4">
    <source>
        <dbReference type="PROSITE-ProRule" id="PRU00090"/>
    </source>
</evidence>
<evidence type="ECO:0000255" key="5">
    <source>
        <dbReference type="PROSITE-ProRule" id="PRU01379"/>
    </source>
</evidence>
<evidence type="ECO:0000256" key="6">
    <source>
        <dbReference type="SAM" id="MobiDB-lite"/>
    </source>
</evidence>
<evidence type="ECO:0000269" key="7">
    <source>
    </source>
</evidence>
<evidence type="ECO:0000269" key="8">
    <source>
    </source>
</evidence>
<evidence type="ECO:0000305" key="9"/>
<sequence>MPTTPLLLAALAALAALAVAAYPSCSPGPDPSGKCQRLASTHSATCVDLHLRTCADAAYNHTSFPTPLEHRSWEAVEASPEYTLLGVLHFLLEGQCNPDLRLLGCSVLAPRCQGGHTQRPCRRVCEGLREACQPAFDAIDMAWPYFLDCTQYFAPEEEGCYDPLEQLRGELDVEEALPSGLPPTFIRFAHHSYAQMVRVLKRTAARCSQVAKTYSIGRSFEGKDLVVIEFSSRPGQHELMEPEVKLIGNIHGNEVAGREILIYLAQYLCSEYLLGNPRIQRLLNTTRIHLLPSMNPDGYEVAAAEGAGYNGWTSGRQNAQNLDLNRNFPDLTSEYYRLASTRGVRTDHIPISQYYWWGKVAPETKAIMKWIQTIPFVLSASLHGGDLVVSYPFDFSKHPHEEKMFSPTPDEKMFKLLARAYADVHPMMMDRSENRCGGNFLKRGSIINGADWYSFTGGMSDFNYLHTNCFEITVELGCVKFPPEEALYGLWQHNKEPLLNFLEMVHRGIKGVVTDKYGKPVKNARILVKGIRHDVTTAPDGDYWRLLPPGSHIVIAQAPGYSKVMKRVTIPLRMKRAGRVDFILQPLGTGPKNFLPGPSRALPRSLDPQGAPAQLDFEPPRARRQPASGSKPWWWAYFTSLSPHKPRWLLKY</sequence>
<protein>
    <recommendedName>
        <fullName>Carboxypeptidase Z</fullName>
        <shortName>CPZ</shortName>
        <ecNumber>3.4.17.-</ecNumber>
    </recommendedName>
</protein>
<feature type="signal peptide" evidence="3">
    <location>
        <begin position="1"/>
        <end position="20"/>
    </location>
</feature>
<feature type="chain" id="PRO_0000252458" description="Carboxypeptidase Z">
    <location>
        <begin position="21"/>
        <end position="652"/>
    </location>
</feature>
<feature type="domain" description="FZ" evidence="4">
    <location>
        <begin position="41"/>
        <end position="163"/>
    </location>
</feature>
<feature type="domain" description="Peptidase M14" evidence="5">
    <location>
        <begin position="189"/>
        <end position="505"/>
    </location>
</feature>
<feature type="region of interest" description="Disordered" evidence="6">
    <location>
        <begin position="594"/>
        <end position="628"/>
    </location>
</feature>
<feature type="active site" description="Proton donor/acceptor" evidence="5">
    <location>
        <position position="475"/>
    </location>
</feature>
<feature type="binding site" evidence="5">
    <location>
        <position position="251"/>
    </location>
    <ligand>
        <name>Zn(2+)</name>
        <dbReference type="ChEBI" id="CHEBI:29105"/>
        <note>catalytic</note>
    </ligand>
</feature>
<feature type="binding site" evidence="5">
    <location>
        <position position="254"/>
    </location>
    <ligand>
        <name>Zn(2+)</name>
        <dbReference type="ChEBI" id="CHEBI:29105"/>
        <note>catalytic</note>
    </ligand>
</feature>
<feature type="binding site" evidence="5">
    <location>
        <position position="383"/>
    </location>
    <ligand>
        <name>Zn(2+)</name>
        <dbReference type="ChEBI" id="CHEBI:29105"/>
        <note>catalytic</note>
    </ligand>
</feature>
<feature type="glycosylation site" description="N-linked (GlcNAc...) asparagine" evidence="3">
    <location>
        <position position="60"/>
    </location>
</feature>
<feature type="glycosylation site" description="N-linked (GlcNAc...) asparagine" evidence="3">
    <location>
        <position position="284"/>
    </location>
</feature>
<feature type="disulfide bond" evidence="4">
    <location>
        <begin position="46"/>
        <end position="112"/>
    </location>
</feature>
<feature type="disulfide bond" evidence="4">
    <location>
        <begin position="54"/>
        <end position="105"/>
    </location>
</feature>
<feature type="disulfide bond" evidence="4">
    <location>
        <begin position="96"/>
        <end position="132"/>
    </location>
</feature>
<feature type="disulfide bond" evidence="4">
    <location>
        <begin position="121"/>
        <end position="160"/>
    </location>
</feature>
<feature type="disulfide bond" evidence="4">
    <location>
        <begin position="125"/>
        <end position="149"/>
    </location>
</feature>
<feature type="sequence conflict" description="In Ref. 1; AAC04669." evidence="9" ref="1">
    <original>P</original>
    <variation>S</variation>
    <location>
        <position position="23"/>
    </location>
</feature>
<accession>O54858</accession>
<accession>O54859</accession>
<gene>
    <name type="primary">Cpz</name>
</gene>
<organism>
    <name type="scientific">Rattus norvegicus</name>
    <name type="common">Rat</name>
    <dbReference type="NCBI Taxonomy" id="10116"/>
    <lineage>
        <taxon>Eukaryota</taxon>
        <taxon>Metazoa</taxon>
        <taxon>Chordata</taxon>
        <taxon>Craniata</taxon>
        <taxon>Vertebrata</taxon>
        <taxon>Euteleostomi</taxon>
        <taxon>Mammalia</taxon>
        <taxon>Eutheria</taxon>
        <taxon>Euarchontoglires</taxon>
        <taxon>Glires</taxon>
        <taxon>Rodentia</taxon>
        <taxon>Myomorpha</taxon>
        <taxon>Muroidea</taxon>
        <taxon>Muridae</taxon>
        <taxon>Murinae</taxon>
        <taxon>Rattus</taxon>
    </lineage>
</organism>
<dbReference type="EC" id="3.4.17.-"/>
<dbReference type="EMBL" id="AF017637">
    <property type="protein sequence ID" value="AAC04668.1"/>
    <property type="molecule type" value="mRNA"/>
</dbReference>
<dbReference type="EMBL" id="AF017638">
    <property type="protein sequence ID" value="AAC04669.1"/>
    <property type="molecule type" value="mRNA"/>
</dbReference>
<dbReference type="RefSeq" id="NP_113954.1">
    <property type="nucleotide sequence ID" value="NM_031766.1"/>
</dbReference>
<dbReference type="SMR" id="O54858"/>
<dbReference type="FunCoup" id="O54858">
    <property type="interactions" value="17"/>
</dbReference>
<dbReference type="STRING" id="10116.ENSRNOP00000012109"/>
<dbReference type="MEROPS" id="M14.012"/>
<dbReference type="GlyCosmos" id="O54858">
    <property type="glycosylation" value="2 sites, No reported glycans"/>
</dbReference>
<dbReference type="GlyGen" id="O54858">
    <property type="glycosylation" value="3 sites"/>
</dbReference>
<dbReference type="PhosphoSitePlus" id="O54858"/>
<dbReference type="jPOST" id="O54858"/>
<dbReference type="PaxDb" id="10116-ENSRNOP00000012109"/>
<dbReference type="GeneID" id="83575"/>
<dbReference type="KEGG" id="rno:83575"/>
<dbReference type="AGR" id="RGD:620496"/>
<dbReference type="CTD" id="8532"/>
<dbReference type="RGD" id="620496">
    <property type="gene designation" value="Cpz"/>
</dbReference>
<dbReference type="eggNOG" id="KOG2649">
    <property type="taxonomic scope" value="Eukaryota"/>
</dbReference>
<dbReference type="InParanoid" id="O54858"/>
<dbReference type="PhylomeDB" id="O54858"/>
<dbReference type="TreeFam" id="TF315592"/>
<dbReference type="PRO" id="PR:O54858"/>
<dbReference type="Proteomes" id="UP000002494">
    <property type="component" value="Unplaced"/>
</dbReference>
<dbReference type="GO" id="GO:0005615">
    <property type="term" value="C:extracellular space"/>
    <property type="evidence" value="ECO:0000318"/>
    <property type="project" value="GO_Central"/>
</dbReference>
<dbReference type="GO" id="GO:0004181">
    <property type="term" value="F:metallocarboxypeptidase activity"/>
    <property type="evidence" value="ECO:0000318"/>
    <property type="project" value="GO_Central"/>
</dbReference>
<dbReference type="GO" id="GO:0008270">
    <property type="term" value="F:zinc ion binding"/>
    <property type="evidence" value="ECO:0007669"/>
    <property type="project" value="InterPro"/>
</dbReference>
<dbReference type="GO" id="GO:0006518">
    <property type="term" value="P:peptide metabolic process"/>
    <property type="evidence" value="ECO:0000318"/>
    <property type="project" value="GO_Central"/>
</dbReference>
<dbReference type="GO" id="GO:0016485">
    <property type="term" value="P:protein processing"/>
    <property type="evidence" value="ECO:0000318"/>
    <property type="project" value="GO_Central"/>
</dbReference>
<dbReference type="GO" id="GO:0016055">
    <property type="term" value="P:Wnt signaling pathway"/>
    <property type="evidence" value="ECO:0007669"/>
    <property type="project" value="UniProtKB-KW"/>
</dbReference>
<dbReference type="CDD" id="cd03867">
    <property type="entry name" value="M14_CPZ"/>
    <property type="match status" value="1"/>
</dbReference>
<dbReference type="CDD" id="cd11308">
    <property type="entry name" value="Peptidase_M14NE-CP-C_like"/>
    <property type="match status" value="1"/>
</dbReference>
<dbReference type="FunFam" id="1.10.2000.10:FF:000012">
    <property type="entry name" value="Carboxypeptidase Z"/>
    <property type="match status" value="1"/>
</dbReference>
<dbReference type="FunFam" id="2.60.40.1120:FF:000010">
    <property type="entry name" value="Carboxypeptidase Z"/>
    <property type="match status" value="1"/>
</dbReference>
<dbReference type="FunFam" id="3.40.630.10:FF:000022">
    <property type="entry name" value="Carboxypeptidase Z"/>
    <property type="match status" value="1"/>
</dbReference>
<dbReference type="Gene3D" id="2.60.40.1120">
    <property type="entry name" value="Carboxypeptidase-like, regulatory domain"/>
    <property type="match status" value="1"/>
</dbReference>
<dbReference type="Gene3D" id="1.10.2000.10">
    <property type="entry name" value="Frizzled cysteine-rich domain"/>
    <property type="match status" value="1"/>
</dbReference>
<dbReference type="Gene3D" id="3.40.630.10">
    <property type="entry name" value="Zn peptidases"/>
    <property type="match status" value="1"/>
</dbReference>
<dbReference type="InterPro" id="IPR008969">
    <property type="entry name" value="CarboxyPept-like_regulatory"/>
</dbReference>
<dbReference type="InterPro" id="IPR020067">
    <property type="entry name" value="Frizzled_dom"/>
</dbReference>
<dbReference type="InterPro" id="IPR036790">
    <property type="entry name" value="Frizzled_dom_sf"/>
</dbReference>
<dbReference type="InterPro" id="IPR034239">
    <property type="entry name" value="M14_CPZ_CPD"/>
</dbReference>
<dbReference type="InterPro" id="IPR000834">
    <property type="entry name" value="Peptidase_M14"/>
</dbReference>
<dbReference type="InterPro" id="IPR050753">
    <property type="entry name" value="Peptidase_M14_domain"/>
</dbReference>
<dbReference type="PANTHER" id="PTHR11532:SF63">
    <property type="entry name" value="CARBOXYPEPTIDASE Z"/>
    <property type="match status" value="1"/>
</dbReference>
<dbReference type="PANTHER" id="PTHR11532">
    <property type="entry name" value="PROTEASE M14 CARBOXYPEPTIDASE"/>
    <property type="match status" value="1"/>
</dbReference>
<dbReference type="Pfam" id="PF13620">
    <property type="entry name" value="CarboxypepD_reg"/>
    <property type="match status" value="1"/>
</dbReference>
<dbReference type="Pfam" id="PF01392">
    <property type="entry name" value="Fz"/>
    <property type="match status" value="1"/>
</dbReference>
<dbReference type="Pfam" id="PF00246">
    <property type="entry name" value="Peptidase_M14"/>
    <property type="match status" value="1"/>
</dbReference>
<dbReference type="PRINTS" id="PR00765">
    <property type="entry name" value="CRBOXYPTASEA"/>
</dbReference>
<dbReference type="SMART" id="SM00063">
    <property type="entry name" value="FRI"/>
    <property type="match status" value="1"/>
</dbReference>
<dbReference type="SMART" id="SM00631">
    <property type="entry name" value="Zn_pept"/>
    <property type="match status" value="1"/>
</dbReference>
<dbReference type="SUPFAM" id="SSF49464">
    <property type="entry name" value="Carboxypeptidase regulatory domain-like"/>
    <property type="match status" value="1"/>
</dbReference>
<dbReference type="SUPFAM" id="SSF63501">
    <property type="entry name" value="Frizzled cysteine-rich domain"/>
    <property type="match status" value="1"/>
</dbReference>
<dbReference type="SUPFAM" id="SSF53187">
    <property type="entry name" value="Zn-dependent exopeptidases"/>
    <property type="match status" value="1"/>
</dbReference>
<dbReference type="PROSITE" id="PS00133">
    <property type="entry name" value="CARBOXYPEPT_ZN_2"/>
    <property type="match status" value="1"/>
</dbReference>
<dbReference type="PROSITE" id="PS50038">
    <property type="entry name" value="FZ"/>
    <property type="match status" value="1"/>
</dbReference>
<dbReference type="PROSITE" id="PS52035">
    <property type="entry name" value="PEPTIDASE_M14"/>
    <property type="match status" value="1"/>
</dbReference>
<keyword id="KW-0121">Carboxypeptidase</keyword>
<keyword id="KW-1015">Disulfide bond</keyword>
<keyword id="KW-0272">Extracellular matrix</keyword>
<keyword id="KW-0325">Glycoprotein</keyword>
<keyword id="KW-0378">Hydrolase</keyword>
<keyword id="KW-0479">Metal-binding</keyword>
<keyword id="KW-0482">Metalloprotease</keyword>
<keyword id="KW-0645">Protease</keyword>
<keyword id="KW-1185">Reference proteome</keyword>
<keyword id="KW-0964">Secreted</keyword>
<keyword id="KW-0732">Signal</keyword>
<keyword id="KW-0879">Wnt signaling pathway</keyword>
<keyword id="KW-0862">Zinc</keyword>
<reference key="1">
    <citation type="journal article" date="1998" name="DNA Cell Biol.">
        <title>Cloning, sequence analysis, and distribution of rat metallocarboxypeptidase Z.</title>
        <authorList>
            <person name="Xin X."/>
            <person name="Day R."/>
            <person name="Dong W."/>
            <person name="Lei Y."/>
            <person name="Fricker L.D."/>
        </authorList>
    </citation>
    <scope>NUCLEOTIDE SEQUENCE [MRNA]</scope>
    <source>
        <strain>Buffalo</strain>
    </source>
</reference>
<reference key="2">
    <citation type="journal article" date="2000" name="J. Biol. Chem.">
        <title>Carboxypeptidase Z is present in the regulated secretory pathway and extracellular matrix in cultured cells and in human tissues.</title>
        <authorList>
            <person name="Novikova E.G."/>
            <person name="Reznik S.E."/>
            <person name="Varlamov O."/>
            <person name="Fricker L.D."/>
        </authorList>
    </citation>
    <scope>SUBCELLULAR LOCATION</scope>
</reference>
<reference key="3">
    <citation type="journal article" date="2002" name="Physiol. Genomics">
        <title>Genomic analysis of alachlor-induced oncogenesis in rat olfactory mucosa.</title>
        <authorList>
            <person name="Genter M.B."/>
            <person name="Burman D.M."/>
            <person name="Vijayakumar S."/>
            <person name="Ebert C.L."/>
            <person name="Aronow B.J."/>
        </authorList>
    </citation>
    <scope>INDUCTION</scope>
</reference>
<comment type="function">
    <text evidence="1">Cleaves substrates with C-terminal arginine residues. Probably modulates the Wnt signaling pathway, by cleaving some undefined protein. May play a role in cleavage during prohormone processing (By similarity).</text>
</comment>
<comment type="cofactor">
    <cofactor evidence="2">
        <name>Zn(2+)</name>
        <dbReference type="ChEBI" id="CHEBI:29105"/>
    </cofactor>
</comment>
<comment type="activity regulation">
    <text evidence="1">Inhibited by 2-mercaptomethyl-3-guanidinoethylthiopropanoic acid (MGTA) and guanidinoethylmercaptosuccinic acid (GEMSA). Inhibited by chelating agents such as EDTA and EGTA (By similarity).</text>
</comment>
<comment type="subcellular location">
    <subcellularLocation>
        <location evidence="7">Secreted</location>
        <location evidence="7">Extracellular space</location>
        <location evidence="7">Extracellular matrix</location>
    </subcellularLocation>
</comment>
<comment type="tissue specificity">
    <text>Abundantly expressed in the placenta, with low to moderate levels in the brain, lung, thymus and kidney.</text>
</comment>
<comment type="induction">
    <text evidence="8">By Alachlor.</text>
</comment>
<comment type="similarity">
    <text evidence="9">Belongs to the peptidase M14 family.</text>
</comment>
<name>CBPZ_RAT</name>